<sequence length="669" mass="75704">MEGNKLEEQDSSPPQSTPGLMKGNKREEQGLGPEPAAPQQPTAEEEALIEFHRSYRELFEFFCNNTTIHGAIRLVCSQHNRMKTAFWAVLWLCTFGMMYWQFGLLFGEYFSYPVSLNINLNSDKLVFPAVTICTLNPYRYPEIKEELEELDRITEQTLFDLYKYSSFTTLVAGSRSRRDLRGTLPHPLQRLRVPPPPHGARRARSVASSLRDNNPQVDWKDWKIGFQLCNQNKSDCFYQTYSSGVDAVREWYRFHYINILSRLPETLPSLEEDTLGNFIFACRFNQVSCNQANYSHFHHPMYGNCYTFNDKNNSNLWMSSMPGINNGLSLMLRAEQNDFIPLLSTVTGARVMVHGQDEPAFMDDGGFNLRPGVETSISMRKETLDRLGGDYGDCTKNGSDVPVENLYPSKYTQQVCIHSCFQESMIKECGCAYIFYPRPQNVEYCDYRKHSSWGYCYYKLQVDFSSDHLGCFTKCRKPCSVTSYQLSAGYSRWPSVTSQEWVFQMLSRQNNYTVNNKRNGVAKVNIFFKELNYKTNSESPSVTMVTLLSNLGSQWSLWFGSSVLSVVEMAELVFDLLVIMFLMLLRRFRSRYWSPGRGGRGAQEVASTLASSPPSHFCPHPMSLSLSQPGPAPSPALTAPPPAYATLGPRPSPGGSAGASSSTCPLGGP</sequence>
<gene>
    <name evidence="41" type="primary">SCNN1A</name>
    <name evidence="41" type="synonym">SCNN1</name>
</gene>
<organism>
    <name type="scientific">Homo sapiens</name>
    <name type="common">Human</name>
    <dbReference type="NCBI Taxonomy" id="9606"/>
    <lineage>
        <taxon>Eukaryota</taxon>
        <taxon>Metazoa</taxon>
        <taxon>Chordata</taxon>
        <taxon>Craniata</taxon>
        <taxon>Vertebrata</taxon>
        <taxon>Euteleostomi</taxon>
        <taxon>Mammalia</taxon>
        <taxon>Eutheria</taxon>
        <taxon>Euarchontoglires</taxon>
        <taxon>Primates</taxon>
        <taxon>Haplorrhini</taxon>
        <taxon>Catarrhini</taxon>
        <taxon>Hominidae</taxon>
        <taxon>Homo</taxon>
    </lineage>
</organism>
<protein>
    <recommendedName>
        <fullName evidence="36">Epithelial sodium channel subunit alpha</fullName>
        <shortName evidence="37">Alpha-ENaC</shortName>
        <shortName evidence="36">ENaC subunit alpha</shortName>
        <shortName>ENaCA</shortName>
        <shortName evidence="37">Epithelial Na(+) channel subunit alpha</shortName>
    </recommendedName>
    <alternativeName>
        <fullName>Alpha-NaCH</fullName>
    </alternativeName>
    <alternativeName>
        <fullName evidence="40">Amiloride-sensitive sodium channel subunit alpha</fullName>
    </alternativeName>
    <alternativeName>
        <fullName>Nonvoltage-gated sodium channel 1 subunit alpha</fullName>
    </alternativeName>
    <alternativeName>
        <fullName>SCNEA</fullName>
    </alternativeName>
    <alternativeName>
        <fullName evidence="41">Sodium channel epithelial 1 subunit alpha</fullName>
    </alternativeName>
</protein>
<evidence type="ECO:0000250" key="1">
    <source>
        <dbReference type="UniProtKB" id="P37089"/>
    </source>
</evidence>
<evidence type="ECO:0000250" key="2">
    <source>
        <dbReference type="UniProtKB" id="Q61180"/>
    </source>
</evidence>
<evidence type="ECO:0000255" key="3"/>
<evidence type="ECO:0000256" key="4">
    <source>
        <dbReference type="SAM" id="MobiDB-lite"/>
    </source>
</evidence>
<evidence type="ECO:0000269" key="5">
    <source>
    </source>
</evidence>
<evidence type="ECO:0000269" key="6">
    <source>
    </source>
</evidence>
<evidence type="ECO:0000269" key="7">
    <source>
    </source>
</evidence>
<evidence type="ECO:0000269" key="8">
    <source>
    </source>
</evidence>
<evidence type="ECO:0000269" key="9">
    <source>
    </source>
</evidence>
<evidence type="ECO:0000269" key="10">
    <source>
    </source>
</evidence>
<evidence type="ECO:0000269" key="11">
    <source>
    </source>
</evidence>
<evidence type="ECO:0000269" key="12">
    <source>
    </source>
</evidence>
<evidence type="ECO:0000269" key="13">
    <source>
    </source>
</evidence>
<evidence type="ECO:0000269" key="14">
    <source>
    </source>
</evidence>
<evidence type="ECO:0000269" key="15">
    <source>
    </source>
</evidence>
<evidence type="ECO:0000269" key="16">
    <source>
    </source>
</evidence>
<evidence type="ECO:0000269" key="17">
    <source>
    </source>
</evidence>
<evidence type="ECO:0000269" key="18">
    <source>
    </source>
</evidence>
<evidence type="ECO:0000269" key="19">
    <source>
    </source>
</evidence>
<evidence type="ECO:0000269" key="20">
    <source>
    </source>
</evidence>
<evidence type="ECO:0000269" key="21">
    <source>
    </source>
</evidence>
<evidence type="ECO:0000269" key="22">
    <source>
    </source>
</evidence>
<evidence type="ECO:0000269" key="23">
    <source>
    </source>
</evidence>
<evidence type="ECO:0000269" key="24">
    <source>
    </source>
</evidence>
<evidence type="ECO:0000269" key="25">
    <source>
    </source>
</evidence>
<evidence type="ECO:0000269" key="26">
    <source>
    </source>
</evidence>
<evidence type="ECO:0000269" key="27">
    <source>
    </source>
</evidence>
<evidence type="ECO:0000269" key="28">
    <source>
    </source>
</evidence>
<evidence type="ECO:0000269" key="29">
    <source>
    </source>
</evidence>
<evidence type="ECO:0000269" key="30">
    <source>
    </source>
</evidence>
<evidence type="ECO:0000269" key="31">
    <source>
    </source>
</evidence>
<evidence type="ECO:0000269" key="32">
    <source>
    </source>
</evidence>
<evidence type="ECO:0000269" key="33">
    <source>
    </source>
</evidence>
<evidence type="ECO:0000269" key="34">
    <source>
    </source>
</evidence>
<evidence type="ECO:0000303" key="35">
    <source>
    </source>
</evidence>
<evidence type="ECO:0000303" key="36">
    <source>
    </source>
</evidence>
<evidence type="ECO:0000303" key="37">
    <source>
    </source>
</evidence>
<evidence type="ECO:0000303" key="38">
    <source>
    </source>
</evidence>
<evidence type="ECO:0000305" key="39"/>
<evidence type="ECO:0000305" key="40">
    <source>
    </source>
</evidence>
<evidence type="ECO:0000312" key="41">
    <source>
        <dbReference type="HGNC" id="HGNC:10599"/>
    </source>
</evidence>
<evidence type="ECO:0007744" key="42">
    <source>
        <dbReference type="PDB" id="2M3O"/>
    </source>
</evidence>
<evidence type="ECO:0007744" key="43">
    <source>
        <dbReference type="PDB" id="6BQN"/>
    </source>
</evidence>
<evidence type="ECO:0007744" key="44">
    <source>
        <dbReference type="PDB" id="6WTH"/>
    </source>
</evidence>
<evidence type="ECO:0007829" key="45">
    <source>
        <dbReference type="PDB" id="2M3O"/>
    </source>
</evidence>
<evidence type="ECO:0007829" key="46">
    <source>
        <dbReference type="PDB" id="6WTH"/>
    </source>
</evidence>
<proteinExistence type="evidence at protein level"/>
<comment type="function">
    <text evidence="11 25 27 28 29 30 31 34">This is one of the three pore-forming subunits of the heterotrimeric epithelial sodium channel (ENaC), a critical regulator of sodium balance and fluid homeostasis (PubMed:30251954, PubMed:32729833, PubMed:8023962, PubMed:8278374, PubMed:9792722). ENaC operates in epithelial tissues, where it mediates the electrodiffusion of sodium ions from extracellular fluid through the apical membrane of cells, with water following osmotically (PubMed:24124190, PubMed:28710092, PubMed:8278374). It plays a key role in maintaining sodium homeostasis through electrogenic sodium reabsorption in the kidneys (PubMed:12107247). Additionally, ENaC is essential for airway surface liquid homeostasis, which is crucial for proper mucus clearance (PubMed:24124190, PubMed:28710092).</text>
</comment>
<comment type="function">
    <molecule>Isoform 4</molecule>
    <text evidence="33">Not functional.</text>
</comment>
<comment type="catalytic activity">
    <reaction evidence="28 29 30 31 34">
        <text>Na(+)(in) = Na(+)(out)</text>
        <dbReference type="Rhea" id="RHEA:34963"/>
        <dbReference type="ChEBI" id="CHEBI:29101"/>
    </reaction>
</comment>
<comment type="activity regulation">
    <text evidence="30 31 34">Originally identified and characterized by its inhibition by the diuretic drug amiloride (PubMed:8023962, PubMed:8278374, PubMed:9792722). Inhibited by phenamil (PubMed:8278374).</text>
</comment>
<comment type="subunit">
    <text evidence="12 23 25 28 29 32">Heterotrimer; containing an alpha/SCNN1A, a beta/SCNN1B and a gamma/SCNN1G subunit (PubMed:30251954, PubMed:32729833). Interacts with WWP1 (via WW domains) (PubMed:9169421). Interacts with WWP2 (via WW domains); inhibits the channel (PubMed:12167593, PubMed:9169421). Interacts with BPIFA1; the interaction is indirect via SCNN1B and inhibits the proteolytic processing of SCNN1A and SCNN1G and the activation of ENaC (PubMed:24124190). Interacts with the full-length immature form of PCSK9 (pro-PCSK9); inhibits ENaC by promoting its proteasomal degradation (PubMed:22493497).</text>
</comment>
<comment type="interaction">
    <interactant intactId="EBI-7845444">
        <id>P37088</id>
    </interactant>
    <interactant intactId="EBI-726944">
        <id>P46934</id>
        <label>NEDD4</label>
    </interactant>
    <organismsDiffer>false</organismsDiffer>
    <experiments>3</experiments>
</comment>
<comment type="interaction">
    <interactant intactId="EBI-7845444">
        <id>P37088</id>
    </interactant>
    <interactant intactId="EBI-2547354">
        <id>P51170</id>
        <label>SCNN1G</label>
    </interactant>
    <organismsDiffer>false</organismsDiffer>
    <experiments>3</experiments>
</comment>
<comment type="subcellular location">
    <subcellularLocation>
        <location evidence="19 22 26">Apical cell membrane</location>
        <topology evidence="29">Multi-pass membrane protein</topology>
    </subcellularLocation>
    <subcellularLocation>
        <location evidence="22">Cell projection</location>
        <location evidence="22">Cilium</location>
    </subcellularLocation>
    <subcellularLocation>
        <location evidence="26">Cytoplasmic granule</location>
    </subcellularLocation>
    <subcellularLocation>
        <location evidence="26">Cytoplasm</location>
    </subcellularLocation>
    <subcellularLocation>
        <location evidence="1">Cytoplasmic vesicle</location>
        <location evidence="1">Secretory vesicle</location>
        <location evidence="1">Acrosome</location>
    </subcellularLocation>
    <subcellularLocation>
        <location evidence="1">Cell projection</location>
        <location evidence="1">Cilium</location>
        <location evidence="1">Flagellum</location>
    </subcellularLocation>
    <text evidence="1 22 25 26">In the oviduct and bronchus, located on cilia in multi-ciliated cells. In endometrial non-ciliated epithelial cells, restricted to apical surfaces. In epidermis, located nearly uniformly in the cytoplasm in a granular distribution (PubMed:28130590). In sebaceous glands, observed only in the cytoplasmic space in between the lipid vesicles (PubMed:28130590). In eccrine sweat glands, mainly located at the apical surface of the cells facing the lumen (PubMed:28130590). In skin, in arrector pili muscle cells and in adipocytes, located in the cytoplasm and colocalized with actin fibers (PubMed:28130590). In spermatogonia, spermatocytes and round spermatids, located in the cytoplasm (By similarity). Prior to spermiation, location shifts from the cytoplasm to the spermatid tail (By similarity). In spermatozoa, localizes at the acrosome and the central region of the sperm flagellum (By similarity).</text>
</comment>
<comment type="alternative products">
    <event type="alternative splicing"/>
    <isoform>
        <id>P37088-1</id>
        <name>1</name>
        <name>Alpha ENAC1</name>
        <sequence type="displayed"/>
    </isoform>
    <isoform>
        <id>P37088-2</id>
        <name>2</name>
        <name>Alpha ENAC2</name>
        <sequence type="described" ref="VSP_007719"/>
    </isoform>
    <isoform>
        <id>P37088-3</id>
        <name>3</name>
        <name evidence="38">Alpha ENACx</name>
        <sequence type="described" ref="VSP_007720 VSP_007721"/>
    </isoform>
    <isoform>
        <id>P37088-4</id>
        <name>4</name>
        <name evidence="38">Alpha ENAC-19</name>
        <sequence type="described" ref="VSP_007722"/>
    </isoform>
    <isoform>
        <id>P37088-5</id>
        <name>5</name>
        <name evidence="38">Alpha ENAC+22</name>
        <sequence type="described" ref="VSP_007723"/>
    </isoform>
    <isoform>
        <id>P37088-6</id>
        <name>6</name>
        <sequence type="described" ref="VSP_043667"/>
    </isoform>
</comment>
<comment type="tissue specificity">
    <text evidence="22 26 33">Expressed in the female reproductive tract, from the fimbrial end of the fallopian tube to the endometrium (at protein level) (PubMed:22207244). Expressed in kidney (at protein level). In the respiratory tract, expressed in the bronchial epithelium (at protein level). Highly expressed in lung. Detected at intermediate levels in pancreas and liver, and at low levels in heart and placenta (PubMed:22207244). in skin, expressed in keratinocytes, melanocytes and Merkel cells of the epidermal sub-layers, stratum basale, stratum spinosum and stratum granulosum (at protein level) (PubMed:28130590). Expressed in the outer root sheath of the hair follicles (at protein level) (PubMed:28130590). Detected in both peripheral and central cells of the sebaceous gland (at protein level) (PubMed:28130590). Expressed by eccrine sweat glands (at protein level) (PubMed:28130590). In skin, also expressed by arrector pili muscle cells and intradermal adipocytes (PubMed:28130590). Isoform 1 and isoform 2 predominate in all tissues.</text>
</comment>
<comment type="tissue specificity">
    <molecule>Isoform 4</molecule>
    <text evidence="33">Detected in lung and heart.</text>
</comment>
<comment type="induction">
    <text evidence="9">By aldosterone.</text>
</comment>
<comment type="PTM">
    <text evidence="8 10 12 17 19 24 34">Ubiquitinated. Can be ubiquitinated at multiple sites and undergo monoubiquitination and polyubiquitination. Ubiquitination by NEDD4 or NEDD4L inhibits the ENaC channel through endocytosis, intracellular retention and degradation of its individual subunits.</text>
</comment>
<comment type="PTM">
    <text evidence="2 25">ENaC is activated through the proteolytic maturation of its subunits. Furin cleaves the SCNN1A subunit, which results in a stepwise increase in the open probability of the channel due to the release of an inhibitory tract (By similarity). BPIFA1, which is recruited by the SCNN1B subunit, prevents the proteolytic activation of ENaC (PubMed:24124190).</text>
</comment>
<comment type="PTM">
    <text evidence="1">N-glycosylated.</text>
</comment>
<comment type="disease" evidence="7 15 20">
    <disease id="DI-01255">
        <name>Pseudohypoaldosteronism 1B1, autosomal recessive</name>
        <acronym>PHA1B1</acronym>
        <description>A form of pseudohypoaldosteronism type 1, a rare salt wasting disease resulting from target organ unresponsiveness to mineralocorticoids. The disorder affects multiple organs, and is characterized by an often fulminant presentation in the neonatal period with dehydration, hyponatremia, hyperkalemia, metabolic acidosis, failure to thrive and weight loss.</description>
        <dbReference type="MIM" id="264350"/>
    </disease>
    <text evidence="20">The disease is caused by variants affecting the gene represented in this entry. The degree of channel function impairment differentially affects the renin-aldosterone system and urinary Na/K ratios, resulting in distinct genotype-phenotype relationships in PHA1 patients. Loss-of-function mutations are associated with a severe clinical course and age-dependent hyperactivation of the renin-aldosterone system. This feature is not observed in patients with missense mutations that reduce but do not eliminate channel function. Markedly reduced channel activity results in impaired linear growth and delayed puberty (PubMed:18634878).</text>
</comment>
<comment type="disease" evidence="21">
    <disease id="DI-02475">
        <name>Bronchiectasis with or without elevated sweat chloride 2</name>
        <acronym>BESC2</acronym>
        <description>A debilitating respiratory disease characterized by chronic, abnormal dilatation of the bronchi and other cystic fibrosis-like symptoms in the absence of known causes of bronchiectasis (cystic fibrosis, autoimmune diseases, ciliary dyskinesia, common variable immunodeficiency, foreign body obstruction). Clinical features include sub-normal lung function, sinopulmonary infections, chronic productive cough, excessive sputum production, and elevated sweat chloride in some cases.</description>
        <dbReference type="MIM" id="613021"/>
    </disease>
    <text>The disease is caused by variants affecting the gene represented in this entry.</text>
</comment>
<comment type="disease" evidence="27">
    <disease id="DI-05332">
        <name>Liddle syndrome 3</name>
        <acronym>LIDLS3</acronym>
        <description>A form of Liddle syndrome, an autosomal dominant disorder characterized by early onset of hypertension, hypokalemic alkalosis, and suppression of plasma renin activity and aldosterone secretion.</description>
        <dbReference type="MIM" id="618126"/>
    </disease>
    <text>The disease is caused by variants affecting the gene represented in this entry.</text>
</comment>
<comment type="miscellaneous">
    <molecule>Isoform 3</molecule>
    <text evidence="33">May be produced at very low levels due to a premature stop codon in the mRNA, leading to nonsense-mediated mRNA decay (PubMed:9575806). No significant expression or activity detected (PubMed:9575806).</text>
</comment>
<comment type="miscellaneous">
    <molecule>Isoform 5</molecule>
    <text evidence="33">No significant expression detected and not functional.</text>
</comment>
<comment type="similarity">
    <text evidence="39">Belongs to the amiloride-sensitive sodium channel (TC 1.A.6) family. SCNN1A subfamily.</text>
</comment>
<comment type="sequence caution" evidence="39">
    <conflict type="erroneous initiation">
        <sequence resource="EMBL-CDS" id="AAH06526"/>
    </conflict>
    <text>Extended N-terminus.</text>
</comment>
<keyword id="KW-0002">3D-structure</keyword>
<keyword id="KW-0025">Alternative splicing</keyword>
<keyword id="KW-1003">Cell membrane</keyword>
<keyword id="KW-0966">Cell projection</keyword>
<keyword id="KW-0969">Cilium</keyword>
<keyword id="KW-0963">Cytoplasm</keyword>
<keyword id="KW-0968">Cytoplasmic vesicle</keyword>
<keyword id="KW-0225">Disease variant</keyword>
<keyword id="KW-1015">Disulfide bond</keyword>
<keyword id="KW-0282">Flagellum</keyword>
<keyword id="KW-0325">Glycoprotein</keyword>
<keyword id="KW-0407">Ion channel</keyword>
<keyword id="KW-0406">Ion transport</keyword>
<keyword id="KW-0472">Membrane</keyword>
<keyword id="KW-1267">Proteomics identification</keyword>
<keyword id="KW-1185">Reference proteome</keyword>
<keyword id="KW-0915">Sodium</keyword>
<keyword id="KW-0894">Sodium channel</keyword>
<keyword id="KW-0739">Sodium transport</keyword>
<keyword id="KW-0812">Transmembrane</keyword>
<keyword id="KW-1133">Transmembrane helix</keyword>
<keyword id="KW-0813">Transport</keyword>
<keyword id="KW-0832">Ubl conjugation</keyword>
<name>SCNNA_HUMAN</name>
<dbReference type="EMBL" id="X76180">
    <property type="protein sequence ID" value="CAA53773.1"/>
    <property type="molecule type" value="mRNA"/>
</dbReference>
<dbReference type="EMBL" id="L29007">
    <property type="protein sequence ID" value="AAA21813.1"/>
    <property type="molecule type" value="Genomic_DNA"/>
</dbReference>
<dbReference type="EMBL" id="Z92978">
    <property type="protein sequence ID" value="CAB07505.1"/>
    <property type="molecule type" value="Genomic_DNA"/>
</dbReference>
<dbReference type="EMBL" id="Z92979">
    <property type="protein sequence ID" value="CAB07505.1"/>
    <property type="status" value="JOINED"/>
    <property type="molecule type" value="Genomic_DNA"/>
</dbReference>
<dbReference type="EMBL" id="Z92980">
    <property type="protein sequence ID" value="CAB07505.1"/>
    <property type="status" value="JOINED"/>
    <property type="molecule type" value="Genomic_DNA"/>
</dbReference>
<dbReference type="EMBL" id="Z92981">
    <property type="protein sequence ID" value="CAB07505.1"/>
    <property type="status" value="JOINED"/>
    <property type="molecule type" value="Genomic_DNA"/>
</dbReference>
<dbReference type="EMBL" id="AF060913">
    <property type="protein sequence ID" value="AAD28355.1"/>
    <property type="molecule type" value="Genomic_DNA"/>
</dbReference>
<dbReference type="EMBL" id="AF060910">
    <property type="protein sequence ID" value="AAD28355.1"/>
    <property type="status" value="JOINED"/>
    <property type="molecule type" value="Genomic_DNA"/>
</dbReference>
<dbReference type="EMBL" id="AF060911">
    <property type="protein sequence ID" value="AAD28355.1"/>
    <property type="status" value="JOINED"/>
    <property type="molecule type" value="Genomic_DNA"/>
</dbReference>
<dbReference type="EMBL" id="AF060912">
    <property type="protein sequence ID" value="AAD28355.1"/>
    <property type="status" value="JOINED"/>
    <property type="molecule type" value="Genomic_DNA"/>
</dbReference>
<dbReference type="EMBL" id="DQ402522">
    <property type="protein sequence ID" value="ABD72218.1"/>
    <property type="molecule type" value="mRNA"/>
</dbReference>
<dbReference type="EMBL" id="AK304379">
    <property type="protein sequence ID" value="BAG65217.1"/>
    <property type="molecule type" value="mRNA"/>
</dbReference>
<dbReference type="EMBL" id="FJ515830">
    <property type="protein sequence ID" value="ACS13721.1"/>
    <property type="molecule type" value="Genomic_DNA"/>
</dbReference>
<dbReference type="EMBL" id="AC005840">
    <property type="status" value="NOT_ANNOTATED_CDS"/>
    <property type="molecule type" value="Genomic_DNA"/>
</dbReference>
<dbReference type="EMBL" id="AC006057">
    <property type="status" value="NOT_ANNOTATED_CDS"/>
    <property type="molecule type" value="Genomic_DNA"/>
</dbReference>
<dbReference type="EMBL" id="CH471116">
    <property type="protein sequence ID" value="EAW88804.1"/>
    <property type="molecule type" value="Genomic_DNA"/>
</dbReference>
<dbReference type="EMBL" id="BC006526">
    <property type="protein sequence ID" value="AAH06526.2"/>
    <property type="status" value="ALT_INIT"/>
    <property type="molecule type" value="mRNA"/>
</dbReference>
<dbReference type="EMBL" id="BC062613">
    <property type="protein sequence ID" value="AAH62613.1"/>
    <property type="molecule type" value="mRNA"/>
</dbReference>
<dbReference type="EMBL" id="U81961">
    <property type="protein sequence ID" value="AAC31773.1"/>
    <property type="molecule type" value="Genomic_DNA"/>
</dbReference>
<dbReference type="EMBL" id="U81961">
    <property type="protein sequence ID" value="AAC31774.1"/>
    <property type="molecule type" value="Genomic_DNA"/>
</dbReference>
<dbReference type="CCDS" id="CCDS53738.1">
    <molecule id="P37088-2"/>
</dbReference>
<dbReference type="CCDS" id="CCDS53739.1">
    <molecule id="P37088-6"/>
</dbReference>
<dbReference type="CCDS" id="CCDS8543.1">
    <molecule id="P37088-1"/>
</dbReference>
<dbReference type="PIR" id="A49585">
    <property type="entry name" value="A49585"/>
</dbReference>
<dbReference type="RefSeq" id="NP_001029.1">
    <molecule id="P37088-1"/>
    <property type="nucleotide sequence ID" value="NM_001038.6"/>
</dbReference>
<dbReference type="RefSeq" id="NP_001153047.1">
    <molecule id="P37088-6"/>
    <property type="nucleotide sequence ID" value="NM_001159575.2"/>
</dbReference>
<dbReference type="RefSeq" id="NP_001153048.1">
    <molecule id="P37088-2"/>
    <property type="nucleotide sequence ID" value="NM_001159576.2"/>
</dbReference>
<dbReference type="PDB" id="2M3O">
    <property type="method" value="NMR"/>
    <property type="chains" value="P=638-648"/>
</dbReference>
<dbReference type="PDB" id="6BQN">
    <property type="method" value="EM"/>
    <property type="resolution" value="3.90 A"/>
    <property type="chains" value="A=111-543"/>
</dbReference>
<dbReference type="PDB" id="6WTH">
    <property type="method" value="EM"/>
    <property type="resolution" value="3.06 A"/>
    <property type="chains" value="A=1-669"/>
</dbReference>
<dbReference type="PDBsum" id="2M3O"/>
<dbReference type="PDBsum" id="6BQN"/>
<dbReference type="PDBsum" id="6WTH"/>
<dbReference type="EMDB" id="EMD-21896"/>
<dbReference type="EMDB" id="EMD-7130"/>
<dbReference type="SMR" id="P37088"/>
<dbReference type="BioGRID" id="112241">
    <property type="interactions" value="102"/>
</dbReference>
<dbReference type="ComplexPortal" id="CPX-2188">
    <property type="entry name" value="Amiloride-sensitive sodium channel complex, alpha-beta-gamma"/>
</dbReference>
<dbReference type="ComplexPortal" id="CPX-312">
    <property type="entry name" value="Amiloride-sensitive sodium channel complex, delta-alpha-beta-gamma"/>
</dbReference>
<dbReference type="CORUM" id="P37088"/>
<dbReference type="ELM" id="P37088"/>
<dbReference type="FunCoup" id="P37088">
    <property type="interactions" value="141"/>
</dbReference>
<dbReference type="IntAct" id="P37088">
    <property type="interactions" value="42"/>
</dbReference>
<dbReference type="MINT" id="P37088"/>
<dbReference type="STRING" id="9606.ENSP00000353292"/>
<dbReference type="BindingDB" id="P37088"/>
<dbReference type="ChEMBL" id="CHEMBL1791"/>
<dbReference type="DrugBank" id="DB00594">
    <property type="generic name" value="Amiloride"/>
</dbReference>
<dbReference type="DrugBank" id="DB14509">
    <property type="generic name" value="Lithium carbonate"/>
</dbReference>
<dbReference type="DrugBank" id="DB00384">
    <property type="generic name" value="Triamterene"/>
</dbReference>
<dbReference type="DrugCentral" id="P37088"/>
<dbReference type="GuidetoPHARMACOLOGY" id="738"/>
<dbReference type="TCDB" id="1.A.6.1.1">
    <property type="family name" value="the epithelial na(+) channel (enac) family"/>
</dbReference>
<dbReference type="GlyGen" id="P37088">
    <property type="glycosylation" value="5 sites, 2 N-linked glycans (3 sites), 1 O-linked glycan (1 site)"/>
</dbReference>
<dbReference type="iPTMnet" id="P37088"/>
<dbReference type="PhosphoSitePlus" id="P37088"/>
<dbReference type="BioMuta" id="SCNN1A"/>
<dbReference type="DMDM" id="585966"/>
<dbReference type="jPOST" id="P37088"/>
<dbReference type="MassIVE" id="P37088"/>
<dbReference type="PaxDb" id="9606-ENSP00000353292"/>
<dbReference type="PeptideAtlas" id="P37088"/>
<dbReference type="ProteomicsDB" id="55257">
    <molecule id="P37088-1"/>
</dbReference>
<dbReference type="ProteomicsDB" id="55258">
    <molecule id="P37088-2"/>
</dbReference>
<dbReference type="ProteomicsDB" id="55259">
    <molecule id="P37088-3"/>
</dbReference>
<dbReference type="ProteomicsDB" id="55260">
    <molecule id="P37088-4"/>
</dbReference>
<dbReference type="ProteomicsDB" id="55261">
    <molecule id="P37088-5"/>
</dbReference>
<dbReference type="ProteomicsDB" id="55262">
    <molecule id="P37088-6"/>
</dbReference>
<dbReference type="Antibodypedia" id="2337">
    <property type="antibodies" value="319 antibodies from 34 providers"/>
</dbReference>
<dbReference type="DNASU" id="6337"/>
<dbReference type="Ensembl" id="ENST00000228916.7">
    <molecule id="P37088-1"/>
    <property type="protein sequence ID" value="ENSP00000228916.2"/>
    <property type="gene ID" value="ENSG00000111319.13"/>
</dbReference>
<dbReference type="Ensembl" id="ENST00000360168.7">
    <molecule id="P37088-2"/>
    <property type="protein sequence ID" value="ENSP00000353292.3"/>
    <property type="gene ID" value="ENSG00000111319.13"/>
</dbReference>
<dbReference type="Ensembl" id="ENST00000543768.1">
    <molecule id="P37088-6"/>
    <property type="protein sequence ID" value="ENSP00000438739.1"/>
    <property type="gene ID" value="ENSG00000111319.13"/>
</dbReference>
<dbReference type="GeneID" id="6337"/>
<dbReference type="KEGG" id="hsa:6337"/>
<dbReference type="MANE-Select" id="ENST00000228916.7">
    <property type="protein sequence ID" value="ENSP00000228916.2"/>
    <property type="RefSeq nucleotide sequence ID" value="NM_001038.6"/>
    <property type="RefSeq protein sequence ID" value="NP_001029.1"/>
</dbReference>
<dbReference type="UCSC" id="uc001qnw.3">
    <molecule id="P37088-1"/>
    <property type="organism name" value="human"/>
</dbReference>
<dbReference type="AGR" id="HGNC:10599"/>
<dbReference type="CTD" id="6337"/>
<dbReference type="DisGeNET" id="6337"/>
<dbReference type="GeneCards" id="SCNN1A"/>
<dbReference type="HGNC" id="HGNC:10599">
    <property type="gene designation" value="SCNN1A"/>
</dbReference>
<dbReference type="HPA" id="ENSG00000111319">
    <property type="expression patterns" value="Tissue enhanced (choroid)"/>
</dbReference>
<dbReference type="MalaCards" id="SCNN1A"/>
<dbReference type="MIM" id="264350">
    <property type="type" value="phenotype"/>
</dbReference>
<dbReference type="MIM" id="600228">
    <property type="type" value="gene"/>
</dbReference>
<dbReference type="MIM" id="613021">
    <property type="type" value="phenotype"/>
</dbReference>
<dbReference type="MIM" id="618126">
    <property type="type" value="phenotype"/>
</dbReference>
<dbReference type="neXtProt" id="NX_P37088"/>
<dbReference type="OpenTargets" id="ENSG00000111319"/>
<dbReference type="Orphanet" id="130">
    <property type="disease" value="Brugada syndrome"/>
</dbReference>
<dbReference type="Orphanet" id="171876">
    <property type="disease" value="Generalized pseudohypoaldosteronism type 1"/>
</dbReference>
<dbReference type="Orphanet" id="60033">
    <property type="disease" value="Idiopathic bronchiectasis"/>
</dbReference>
<dbReference type="Orphanet" id="526">
    <property type="disease" value="Liddle syndrome"/>
</dbReference>
<dbReference type="PharmGKB" id="PA305"/>
<dbReference type="VEuPathDB" id="HostDB:ENSG00000111319"/>
<dbReference type="eggNOG" id="KOG4294">
    <property type="taxonomic scope" value="Eukaryota"/>
</dbReference>
<dbReference type="GeneTree" id="ENSGT00940000160952"/>
<dbReference type="HOGENOM" id="CLU_020415_0_1_1"/>
<dbReference type="InParanoid" id="P37088"/>
<dbReference type="OMA" id="MRQCKQE"/>
<dbReference type="OrthoDB" id="6238402at2759"/>
<dbReference type="PAN-GO" id="P37088">
    <property type="GO annotations" value="3 GO annotations based on evolutionary models"/>
</dbReference>
<dbReference type="PhylomeDB" id="P37088"/>
<dbReference type="TreeFam" id="TF330663"/>
<dbReference type="PathwayCommons" id="P37088"/>
<dbReference type="Reactome" id="R-HSA-2672351">
    <property type="pathway name" value="Stimuli-sensing channels"/>
</dbReference>
<dbReference type="Reactome" id="R-HSA-9730628">
    <property type="pathway name" value="Sensory perception of salty taste"/>
</dbReference>
<dbReference type="SignaLink" id="P37088"/>
<dbReference type="SIGNOR" id="P37088"/>
<dbReference type="BioGRID-ORCS" id="6337">
    <property type="hits" value="11 hits in 1152 CRISPR screens"/>
</dbReference>
<dbReference type="ChiTaRS" id="SCNN1A">
    <property type="organism name" value="human"/>
</dbReference>
<dbReference type="EvolutionaryTrace" id="P37088"/>
<dbReference type="GeneWiki" id="SCNN1A"/>
<dbReference type="GenomeRNAi" id="6337"/>
<dbReference type="Pharos" id="P37088">
    <property type="development level" value="Tclin"/>
</dbReference>
<dbReference type="PRO" id="PR:P37088"/>
<dbReference type="Proteomes" id="UP000005640">
    <property type="component" value="Chromosome 12"/>
</dbReference>
<dbReference type="RNAct" id="P37088">
    <property type="molecule type" value="protein"/>
</dbReference>
<dbReference type="Bgee" id="ENSG00000111319">
    <property type="expression patterns" value="Expressed in nasal cavity epithelium and 200 other cell types or tissues"/>
</dbReference>
<dbReference type="ExpressionAtlas" id="P37088">
    <property type="expression patterns" value="baseline and differential"/>
</dbReference>
<dbReference type="GO" id="GO:0001669">
    <property type="term" value="C:acrosomal vesicle"/>
    <property type="evidence" value="ECO:0000250"/>
    <property type="project" value="UniProtKB"/>
</dbReference>
<dbReference type="GO" id="GO:0016324">
    <property type="term" value="C:apical plasma membrane"/>
    <property type="evidence" value="ECO:0000314"/>
    <property type="project" value="UniProtKB"/>
</dbReference>
<dbReference type="GO" id="GO:0060170">
    <property type="term" value="C:ciliary membrane"/>
    <property type="evidence" value="ECO:0000314"/>
    <property type="project" value="UniProtKB"/>
</dbReference>
<dbReference type="GO" id="GO:0005737">
    <property type="term" value="C:cytoplasm"/>
    <property type="evidence" value="ECO:0000314"/>
    <property type="project" value="UniProtKB"/>
</dbReference>
<dbReference type="GO" id="GO:0005829">
    <property type="term" value="C:cytosol"/>
    <property type="evidence" value="ECO:0007669"/>
    <property type="project" value="Ensembl"/>
</dbReference>
<dbReference type="GO" id="GO:0009897">
    <property type="term" value="C:external side of plasma membrane"/>
    <property type="evidence" value="ECO:0007669"/>
    <property type="project" value="Ensembl"/>
</dbReference>
<dbReference type="GO" id="GO:0070062">
    <property type="term" value="C:extracellular exosome"/>
    <property type="evidence" value="ECO:0000314"/>
    <property type="project" value="UniProtKB"/>
</dbReference>
<dbReference type="GO" id="GO:0031514">
    <property type="term" value="C:motile cilium"/>
    <property type="evidence" value="ECO:0000314"/>
    <property type="project" value="UniProtKB"/>
</dbReference>
<dbReference type="GO" id="GO:0005886">
    <property type="term" value="C:plasma membrane"/>
    <property type="evidence" value="ECO:0000314"/>
    <property type="project" value="UniProtKB"/>
</dbReference>
<dbReference type="GO" id="GO:0034706">
    <property type="term" value="C:sodium channel complex"/>
    <property type="evidence" value="ECO:0000314"/>
    <property type="project" value="UniProtKB"/>
</dbReference>
<dbReference type="GO" id="GO:0097228">
    <property type="term" value="C:sperm principal piece"/>
    <property type="evidence" value="ECO:0000250"/>
    <property type="project" value="UniProtKB"/>
</dbReference>
<dbReference type="GO" id="GO:0015280">
    <property type="term" value="F:ligand-gated sodium channel activity"/>
    <property type="evidence" value="ECO:0000318"/>
    <property type="project" value="GO_Central"/>
</dbReference>
<dbReference type="GO" id="GO:0050699">
    <property type="term" value="F:WW domain binding"/>
    <property type="evidence" value="ECO:0000353"/>
    <property type="project" value="BHF-UCL"/>
</dbReference>
<dbReference type="GO" id="GO:0071468">
    <property type="term" value="P:cellular response to acidic pH"/>
    <property type="evidence" value="ECO:0000314"/>
    <property type="project" value="ComplexPortal"/>
</dbReference>
<dbReference type="GO" id="GO:1904045">
    <property type="term" value="P:cellular response to aldosterone"/>
    <property type="evidence" value="ECO:0000303"/>
    <property type="project" value="ComplexPortal"/>
</dbReference>
<dbReference type="GO" id="GO:1904117">
    <property type="term" value="P:cellular response to vasopressin"/>
    <property type="evidence" value="ECO:0000303"/>
    <property type="project" value="ComplexPortal"/>
</dbReference>
<dbReference type="GO" id="GO:0006883">
    <property type="term" value="P:intracellular sodium ion homeostasis"/>
    <property type="evidence" value="ECO:0000314"/>
    <property type="project" value="ComplexPortal"/>
</dbReference>
<dbReference type="GO" id="GO:0050891">
    <property type="term" value="P:multicellular organismal-level water homeostasis"/>
    <property type="evidence" value="ECO:0000314"/>
    <property type="project" value="UniProtKB"/>
</dbReference>
<dbReference type="GO" id="GO:0008217">
    <property type="term" value="P:regulation of blood pressure"/>
    <property type="evidence" value="ECO:0000303"/>
    <property type="project" value="ComplexPortal"/>
</dbReference>
<dbReference type="GO" id="GO:0050914">
    <property type="term" value="P:sensory perception of salty taste"/>
    <property type="evidence" value="ECO:0000303"/>
    <property type="project" value="ComplexPortal"/>
</dbReference>
<dbReference type="GO" id="GO:0050915">
    <property type="term" value="P:sensory perception of sour taste"/>
    <property type="evidence" value="ECO:0000303"/>
    <property type="project" value="ComplexPortal"/>
</dbReference>
<dbReference type="GO" id="GO:0055078">
    <property type="term" value="P:sodium ion homeostasis"/>
    <property type="evidence" value="ECO:0000314"/>
    <property type="project" value="UniProtKB"/>
</dbReference>
<dbReference type="GO" id="GO:0098719">
    <property type="term" value="P:sodium ion import across plasma membrane"/>
    <property type="evidence" value="ECO:0000314"/>
    <property type="project" value="ComplexPortal"/>
</dbReference>
<dbReference type="GO" id="GO:0035725">
    <property type="term" value="P:sodium ion transmembrane transport"/>
    <property type="evidence" value="ECO:0000314"/>
    <property type="project" value="UniProtKB"/>
</dbReference>
<dbReference type="FunFam" id="2.60.470.10:FF:000002">
    <property type="entry name" value="Amiloride-sensitive sodium channel subunit alpha"/>
    <property type="match status" value="1"/>
</dbReference>
<dbReference type="FunFam" id="1.10.287.770:FF:000002">
    <property type="entry name" value="Amiloride-sensitive sodium channel subunit beta 1"/>
    <property type="match status" value="1"/>
</dbReference>
<dbReference type="Gene3D" id="2.60.470.10">
    <property type="entry name" value="Acid-sensing ion channels like domains"/>
    <property type="match status" value="1"/>
</dbReference>
<dbReference type="Gene3D" id="1.10.287.770">
    <property type="entry name" value="YojJ-like"/>
    <property type="match status" value="1"/>
</dbReference>
<dbReference type="InterPro" id="IPR001873">
    <property type="entry name" value="ENaC"/>
</dbReference>
<dbReference type="InterPro" id="IPR004724">
    <property type="entry name" value="ENaC_chordates"/>
</dbReference>
<dbReference type="InterPro" id="IPR020903">
    <property type="entry name" value="ENaC_CS"/>
</dbReference>
<dbReference type="NCBIfam" id="TIGR00859">
    <property type="entry name" value="ENaC"/>
    <property type="match status" value="1"/>
</dbReference>
<dbReference type="PANTHER" id="PTHR11690:SF124">
    <property type="entry name" value="AMILORIDE-SENSITIVE SODIUM CHANNEL SUBUNIT ALPHA"/>
    <property type="match status" value="1"/>
</dbReference>
<dbReference type="PANTHER" id="PTHR11690">
    <property type="entry name" value="AMILORIDE-SENSITIVE SODIUM CHANNEL-RELATED"/>
    <property type="match status" value="1"/>
</dbReference>
<dbReference type="Pfam" id="PF00858">
    <property type="entry name" value="ASC"/>
    <property type="match status" value="1"/>
</dbReference>
<dbReference type="PRINTS" id="PR01078">
    <property type="entry name" value="AMINACHANNEL"/>
</dbReference>
<dbReference type="PROSITE" id="PS01206">
    <property type="entry name" value="ASC"/>
    <property type="match status" value="1"/>
</dbReference>
<reference key="1">
    <citation type="journal article" date="1994" name="Proc. Natl. Acad. Sci. U.S.A.">
        <title>The lung amiloride-sensitive Na+ channel: biophysical properties, pharmacology, ontogenesis, and molecular cloning.</title>
        <authorList>
            <person name="Voilley N."/>
            <person name="Lingueglia E."/>
            <person name="Champigny G."/>
            <person name="Mattei M.-G."/>
            <person name="Waldmann R."/>
            <person name="Lazdunski M."/>
            <person name="Barbry P."/>
        </authorList>
    </citation>
    <scope>NUCLEOTIDE SEQUENCE [MRNA] (ISOFORM 1)</scope>
    <scope>FUNCTION</scope>
    <scope>TRANSPORTER ACTIVITY</scope>
    <scope>ACTIVITY REGULATION</scope>
    <source>
        <tissue>Lung</tissue>
    </source>
</reference>
<reference key="2">
    <citation type="journal article" date="1994" name="Am. J. Physiol.">
        <title>Cloning, expression, and tissue distribution of a human amiloride-sensitive Na+ channel.</title>
        <authorList>
            <person name="McDonald F.J."/>
            <person name="Snyder P.M."/>
            <person name="McCray P.B. Jr."/>
            <person name="Welsh M.J."/>
        </authorList>
    </citation>
    <scope>NUCLEOTIDE SEQUENCE [GENOMIC DNA]</scope>
    <scope>FUNCTION</scope>
    <scope>TRANSPORTER ACTIVITY</scope>
    <scope>ACTIVITY REGULATION</scope>
    <source>
        <tissue>Kidney</tissue>
    </source>
</reference>
<reference key="3">
    <citation type="journal article" date="1998" name="Hum. Genet.">
        <title>Structural organisation of the gene encoding the alpha-subunit of the human amiloride-sensitive epithelial sodium channel.</title>
        <authorList>
            <person name="Ludwig M."/>
            <person name="Bolkenius U."/>
            <person name="Wickert L."/>
            <person name="Marynen P."/>
            <person name="Bidlingmaier F."/>
        </authorList>
    </citation>
    <scope>NUCLEOTIDE SEQUENCE [GENOMIC DNA]</scope>
</reference>
<reference key="4">
    <citation type="journal article" date="1999" name="Pediatr. Res.">
        <title>Hormonal regulation and genomic organization of the human amiloride-sensitive epithelial sodium channel alpha subunit gene.</title>
        <authorList>
            <person name="Chow Y.H."/>
            <person name="Wang Y."/>
            <person name="Plumb J."/>
            <person name="O'Brodovich H."/>
            <person name="Hu J."/>
        </authorList>
    </citation>
    <scope>NUCLEOTIDE SEQUENCE [GENOMIC DNA]</scope>
</reference>
<reference key="5">
    <citation type="journal article" date="2008" name="J. Cyst. Fibros.">
        <title>Upregulated expression of ENaC in human CF nasal epithelium.</title>
        <authorList>
            <person name="Bangel N."/>
            <person name="Dahlhoff C."/>
            <person name="Sobczak K."/>
            <person name="Weber W.M."/>
            <person name="Kusche-Vihrog K."/>
        </authorList>
    </citation>
    <scope>NUCLEOTIDE SEQUENCE [MRNA] (ISOFORM 1)</scope>
    <scope>VARIANT ALA-663</scope>
    <source>
        <tissue>Nasal epithelium</tissue>
    </source>
</reference>
<reference key="6">
    <citation type="journal article" date="2004" name="Nat. Genet.">
        <title>Complete sequencing and characterization of 21,243 full-length human cDNAs.</title>
        <authorList>
            <person name="Ota T."/>
            <person name="Suzuki Y."/>
            <person name="Nishikawa T."/>
            <person name="Otsuki T."/>
            <person name="Sugiyama T."/>
            <person name="Irie R."/>
            <person name="Wakamatsu A."/>
            <person name="Hayashi K."/>
            <person name="Sato H."/>
            <person name="Nagai K."/>
            <person name="Kimura K."/>
            <person name="Makita H."/>
            <person name="Sekine M."/>
            <person name="Obayashi M."/>
            <person name="Nishi T."/>
            <person name="Shibahara T."/>
            <person name="Tanaka T."/>
            <person name="Ishii S."/>
            <person name="Yamamoto J."/>
            <person name="Saito K."/>
            <person name="Kawai Y."/>
            <person name="Isono Y."/>
            <person name="Nakamura Y."/>
            <person name="Nagahari K."/>
            <person name="Murakami K."/>
            <person name="Yasuda T."/>
            <person name="Iwayanagi T."/>
            <person name="Wagatsuma M."/>
            <person name="Shiratori A."/>
            <person name="Sudo H."/>
            <person name="Hosoiri T."/>
            <person name="Kaku Y."/>
            <person name="Kodaira H."/>
            <person name="Kondo H."/>
            <person name="Sugawara M."/>
            <person name="Takahashi M."/>
            <person name="Kanda K."/>
            <person name="Yokoi T."/>
            <person name="Furuya T."/>
            <person name="Kikkawa E."/>
            <person name="Omura Y."/>
            <person name="Abe K."/>
            <person name="Kamihara K."/>
            <person name="Katsuta N."/>
            <person name="Sato K."/>
            <person name="Tanikawa M."/>
            <person name="Yamazaki M."/>
            <person name="Ninomiya K."/>
            <person name="Ishibashi T."/>
            <person name="Yamashita H."/>
            <person name="Murakawa K."/>
            <person name="Fujimori K."/>
            <person name="Tanai H."/>
            <person name="Kimata M."/>
            <person name="Watanabe M."/>
            <person name="Hiraoka S."/>
            <person name="Chiba Y."/>
            <person name="Ishida S."/>
            <person name="Ono Y."/>
            <person name="Takiguchi S."/>
            <person name="Watanabe S."/>
            <person name="Yosida M."/>
            <person name="Hotuta T."/>
            <person name="Kusano J."/>
            <person name="Kanehori K."/>
            <person name="Takahashi-Fujii A."/>
            <person name="Hara H."/>
            <person name="Tanase T.-O."/>
            <person name="Nomura Y."/>
            <person name="Togiya S."/>
            <person name="Komai F."/>
            <person name="Hara R."/>
            <person name="Takeuchi K."/>
            <person name="Arita M."/>
            <person name="Imose N."/>
            <person name="Musashino K."/>
            <person name="Yuuki H."/>
            <person name="Oshima A."/>
            <person name="Sasaki N."/>
            <person name="Aotsuka S."/>
            <person name="Yoshikawa Y."/>
            <person name="Matsunawa H."/>
            <person name="Ichihara T."/>
            <person name="Shiohata N."/>
            <person name="Sano S."/>
            <person name="Moriya S."/>
            <person name="Momiyama H."/>
            <person name="Satoh N."/>
            <person name="Takami S."/>
            <person name="Terashima Y."/>
            <person name="Suzuki O."/>
            <person name="Nakagawa S."/>
            <person name="Senoh A."/>
            <person name="Mizoguchi H."/>
            <person name="Goto Y."/>
            <person name="Shimizu F."/>
            <person name="Wakebe H."/>
            <person name="Hishigaki H."/>
            <person name="Watanabe T."/>
            <person name="Sugiyama A."/>
            <person name="Takemoto M."/>
            <person name="Kawakami B."/>
            <person name="Yamazaki M."/>
            <person name="Watanabe K."/>
            <person name="Kumagai A."/>
            <person name="Itakura S."/>
            <person name="Fukuzumi Y."/>
            <person name="Fujimori Y."/>
            <person name="Komiyama M."/>
            <person name="Tashiro H."/>
            <person name="Tanigami A."/>
            <person name="Fujiwara T."/>
            <person name="Ono T."/>
            <person name="Yamada K."/>
            <person name="Fujii Y."/>
            <person name="Ozaki K."/>
            <person name="Hirao M."/>
            <person name="Ohmori Y."/>
            <person name="Kawabata A."/>
            <person name="Hikiji T."/>
            <person name="Kobatake N."/>
            <person name="Inagaki H."/>
            <person name="Ikema Y."/>
            <person name="Okamoto S."/>
            <person name="Okitani R."/>
            <person name="Kawakami T."/>
            <person name="Noguchi S."/>
            <person name="Itoh T."/>
            <person name="Shigeta K."/>
            <person name="Senba T."/>
            <person name="Matsumura K."/>
            <person name="Nakajima Y."/>
            <person name="Mizuno T."/>
            <person name="Morinaga M."/>
            <person name="Sasaki M."/>
            <person name="Togashi T."/>
            <person name="Oyama M."/>
            <person name="Hata H."/>
            <person name="Watanabe M."/>
            <person name="Komatsu T."/>
            <person name="Mizushima-Sugano J."/>
            <person name="Satoh T."/>
            <person name="Shirai Y."/>
            <person name="Takahashi Y."/>
            <person name="Nakagawa K."/>
            <person name="Okumura K."/>
            <person name="Nagase T."/>
            <person name="Nomura N."/>
            <person name="Kikuchi H."/>
            <person name="Masuho Y."/>
            <person name="Yamashita R."/>
            <person name="Nakai K."/>
            <person name="Yada T."/>
            <person name="Nakamura Y."/>
            <person name="Ohara O."/>
            <person name="Isogai T."/>
            <person name="Sugano S."/>
        </authorList>
    </citation>
    <scope>NUCLEOTIDE SEQUENCE [LARGE SCALE MRNA] (ISOFORM 6)</scope>
    <source>
        <tissue>Trachea</tissue>
    </source>
</reference>
<reference key="7">
    <citation type="submission" date="2008-12" db="EMBL/GenBank/DDBJ databases">
        <authorList>
            <consortium name="NHLBI resequencing and genotyping service (RS&amp;G)"/>
        </authorList>
    </citation>
    <scope>NUCLEOTIDE SEQUENCE [GENOMIC DNA]</scope>
</reference>
<reference key="8">
    <citation type="journal article" date="2006" name="Nature">
        <title>The finished DNA sequence of human chromosome 12.</title>
        <authorList>
            <person name="Scherer S.E."/>
            <person name="Muzny D.M."/>
            <person name="Buhay C.J."/>
            <person name="Chen R."/>
            <person name="Cree A."/>
            <person name="Ding Y."/>
            <person name="Dugan-Rocha S."/>
            <person name="Gill R."/>
            <person name="Gunaratne P."/>
            <person name="Harris R.A."/>
            <person name="Hawes A.C."/>
            <person name="Hernandez J."/>
            <person name="Hodgson A.V."/>
            <person name="Hume J."/>
            <person name="Jackson A."/>
            <person name="Khan Z.M."/>
            <person name="Kovar-Smith C."/>
            <person name="Lewis L.R."/>
            <person name="Lozado R.J."/>
            <person name="Metzker M.L."/>
            <person name="Milosavljevic A."/>
            <person name="Miner G.R."/>
            <person name="Montgomery K.T."/>
            <person name="Morgan M.B."/>
            <person name="Nazareth L.V."/>
            <person name="Scott G."/>
            <person name="Sodergren E."/>
            <person name="Song X.-Z."/>
            <person name="Steffen D."/>
            <person name="Lovering R.C."/>
            <person name="Wheeler D.A."/>
            <person name="Worley K.C."/>
            <person name="Yuan Y."/>
            <person name="Zhang Z."/>
            <person name="Adams C.Q."/>
            <person name="Ansari-Lari M.A."/>
            <person name="Ayele M."/>
            <person name="Brown M.J."/>
            <person name="Chen G."/>
            <person name="Chen Z."/>
            <person name="Clerc-Blankenburg K.P."/>
            <person name="Davis C."/>
            <person name="Delgado O."/>
            <person name="Dinh H.H."/>
            <person name="Draper H."/>
            <person name="Gonzalez-Garay M.L."/>
            <person name="Havlak P."/>
            <person name="Jackson L.R."/>
            <person name="Jacob L.S."/>
            <person name="Kelly S.H."/>
            <person name="Li L."/>
            <person name="Li Z."/>
            <person name="Liu J."/>
            <person name="Liu W."/>
            <person name="Lu J."/>
            <person name="Maheshwari M."/>
            <person name="Nguyen B.-V."/>
            <person name="Okwuonu G.O."/>
            <person name="Pasternak S."/>
            <person name="Perez L.M."/>
            <person name="Plopper F.J.H."/>
            <person name="Santibanez J."/>
            <person name="Shen H."/>
            <person name="Tabor P.E."/>
            <person name="Verduzco D."/>
            <person name="Waldron L."/>
            <person name="Wang Q."/>
            <person name="Williams G.A."/>
            <person name="Zhang J."/>
            <person name="Zhou J."/>
            <person name="Allen C.C."/>
            <person name="Amin A.G."/>
            <person name="Anyalebechi V."/>
            <person name="Bailey M."/>
            <person name="Barbaria J.A."/>
            <person name="Bimage K.E."/>
            <person name="Bryant N.P."/>
            <person name="Burch P.E."/>
            <person name="Burkett C.E."/>
            <person name="Burrell K.L."/>
            <person name="Calderon E."/>
            <person name="Cardenas V."/>
            <person name="Carter K."/>
            <person name="Casias K."/>
            <person name="Cavazos I."/>
            <person name="Cavazos S.R."/>
            <person name="Ceasar H."/>
            <person name="Chacko J."/>
            <person name="Chan S.N."/>
            <person name="Chavez D."/>
            <person name="Christopoulos C."/>
            <person name="Chu J."/>
            <person name="Cockrell R."/>
            <person name="Cox C.D."/>
            <person name="Dang M."/>
            <person name="Dathorne S.R."/>
            <person name="David R."/>
            <person name="Davis C.M."/>
            <person name="Davy-Carroll L."/>
            <person name="Deshazo D.R."/>
            <person name="Donlin J.E."/>
            <person name="D'Souza L."/>
            <person name="Eaves K.A."/>
            <person name="Egan A."/>
            <person name="Emery-Cohen A.J."/>
            <person name="Escotto M."/>
            <person name="Flagg N."/>
            <person name="Forbes L.D."/>
            <person name="Gabisi A.M."/>
            <person name="Garza M."/>
            <person name="Hamilton C."/>
            <person name="Henderson N."/>
            <person name="Hernandez O."/>
            <person name="Hines S."/>
            <person name="Hogues M.E."/>
            <person name="Huang M."/>
            <person name="Idlebird D.G."/>
            <person name="Johnson R."/>
            <person name="Jolivet A."/>
            <person name="Jones S."/>
            <person name="Kagan R."/>
            <person name="King L.M."/>
            <person name="Leal B."/>
            <person name="Lebow H."/>
            <person name="Lee S."/>
            <person name="LeVan J.M."/>
            <person name="Lewis L.C."/>
            <person name="London P."/>
            <person name="Lorensuhewa L.M."/>
            <person name="Loulseged H."/>
            <person name="Lovett D.A."/>
            <person name="Lucier A."/>
            <person name="Lucier R.L."/>
            <person name="Ma J."/>
            <person name="Madu R.C."/>
            <person name="Mapua P."/>
            <person name="Martindale A.D."/>
            <person name="Martinez E."/>
            <person name="Massey E."/>
            <person name="Mawhiney S."/>
            <person name="Meador M.G."/>
            <person name="Mendez S."/>
            <person name="Mercado C."/>
            <person name="Mercado I.C."/>
            <person name="Merritt C.E."/>
            <person name="Miner Z.L."/>
            <person name="Minja E."/>
            <person name="Mitchell T."/>
            <person name="Mohabbat F."/>
            <person name="Mohabbat K."/>
            <person name="Montgomery B."/>
            <person name="Moore N."/>
            <person name="Morris S."/>
            <person name="Munidasa M."/>
            <person name="Ngo R.N."/>
            <person name="Nguyen N.B."/>
            <person name="Nickerson E."/>
            <person name="Nwaokelemeh O.O."/>
            <person name="Nwokenkwo S."/>
            <person name="Obregon M."/>
            <person name="Oguh M."/>
            <person name="Oragunye N."/>
            <person name="Oviedo R.J."/>
            <person name="Parish B.J."/>
            <person name="Parker D.N."/>
            <person name="Parrish J."/>
            <person name="Parks K.L."/>
            <person name="Paul H.A."/>
            <person name="Payton B.A."/>
            <person name="Perez A."/>
            <person name="Perrin W."/>
            <person name="Pickens A."/>
            <person name="Primus E.L."/>
            <person name="Pu L.-L."/>
            <person name="Puazo M."/>
            <person name="Quiles M.M."/>
            <person name="Quiroz J.B."/>
            <person name="Rabata D."/>
            <person name="Reeves K."/>
            <person name="Ruiz S.J."/>
            <person name="Shao H."/>
            <person name="Sisson I."/>
            <person name="Sonaike T."/>
            <person name="Sorelle R.P."/>
            <person name="Sutton A.E."/>
            <person name="Svatek A.F."/>
            <person name="Svetz L.A."/>
            <person name="Tamerisa K.S."/>
            <person name="Taylor T.R."/>
            <person name="Teague B."/>
            <person name="Thomas N."/>
            <person name="Thorn R.D."/>
            <person name="Trejos Z.Y."/>
            <person name="Trevino B.K."/>
            <person name="Ukegbu O.N."/>
            <person name="Urban J.B."/>
            <person name="Vasquez L.I."/>
            <person name="Vera V.A."/>
            <person name="Villasana D.M."/>
            <person name="Wang L."/>
            <person name="Ward-Moore S."/>
            <person name="Warren J.T."/>
            <person name="Wei X."/>
            <person name="White F."/>
            <person name="Williamson A.L."/>
            <person name="Wleczyk R."/>
            <person name="Wooden H.S."/>
            <person name="Wooden S.H."/>
            <person name="Yen J."/>
            <person name="Yoon L."/>
            <person name="Yoon V."/>
            <person name="Zorrilla S.E."/>
            <person name="Nelson D."/>
            <person name="Kucherlapati R."/>
            <person name="Weinstock G."/>
            <person name="Gibbs R.A."/>
        </authorList>
    </citation>
    <scope>NUCLEOTIDE SEQUENCE [LARGE SCALE GENOMIC DNA]</scope>
</reference>
<reference key="9">
    <citation type="submission" date="2005-09" db="EMBL/GenBank/DDBJ databases">
        <authorList>
            <person name="Mural R.J."/>
            <person name="Istrail S."/>
            <person name="Sutton G.G."/>
            <person name="Florea L."/>
            <person name="Halpern A.L."/>
            <person name="Mobarry C.M."/>
            <person name="Lippert R."/>
            <person name="Walenz B."/>
            <person name="Shatkay H."/>
            <person name="Dew I."/>
            <person name="Miller J.R."/>
            <person name="Flanigan M.J."/>
            <person name="Edwards N.J."/>
            <person name="Bolanos R."/>
            <person name="Fasulo D."/>
            <person name="Halldorsson B.V."/>
            <person name="Hannenhalli S."/>
            <person name="Turner R."/>
            <person name="Yooseph S."/>
            <person name="Lu F."/>
            <person name="Nusskern D.R."/>
            <person name="Shue B.C."/>
            <person name="Zheng X.H."/>
            <person name="Zhong F."/>
            <person name="Delcher A.L."/>
            <person name="Huson D.H."/>
            <person name="Kravitz S.A."/>
            <person name="Mouchard L."/>
            <person name="Reinert K."/>
            <person name="Remington K.A."/>
            <person name="Clark A.G."/>
            <person name="Waterman M.S."/>
            <person name="Eichler E.E."/>
            <person name="Adams M.D."/>
            <person name="Hunkapiller M.W."/>
            <person name="Myers E.W."/>
            <person name="Venter J.C."/>
        </authorList>
    </citation>
    <scope>NUCLEOTIDE SEQUENCE [LARGE SCALE GENOMIC DNA]</scope>
</reference>
<reference key="10">
    <citation type="journal article" date="2004" name="Genome Res.">
        <title>The status, quality, and expansion of the NIH full-length cDNA project: the Mammalian Gene Collection (MGC).</title>
        <authorList>
            <consortium name="The MGC Project Team"/>
        </authorList>
    </citation>
    <scope>NUCLEOTIDE SEQUENCE [LARGE SCALE MRNA] (ISOFORM 1)</scope>
    <scope>VARIANT ALA-663</scope>
    <source>
        <tissue>Colon</tissue>
        <tissue>Lung</tissue>
    </source>
</reference>
<reference key="11">
    <citation type="journal article" date="1998" name="Am. J. Physiol.">
        <title>5' heterogeneity in epithelial sodium channel alpha-subunit mRNA leads to distinct NH2-terminal variant proteins.</title>
        <authorList>
            <person name="Thomas C.P."/>
            <person name="Auerbach S.D."/>
            <person name="Stokes J.B."/>
            <person name="Volk K.A."/>
        </authorList>
    </citation>
    <scope>NUCLEOTIDE SEQUENCE [GENOMIC DNA] OF 1-50</scope>
    <scope>ALTERNATIVE SPLICING (ISOFORMS 1 AND 2)</scope>
    <source>
        <tissue>Kidney</tissue>
    </source>
</reference>
<reference key="12">
    <citation type="journal article" date="2001" name="Mol. Endocrinol.">
        <title>The alpha-subunit of the epithelial sodium channel is an aldosterone-induced transcript in mammalian collecting ducts, and this transcriptional response is mediated via distinct cis-elements in the 5'-flanking region of the gene.</title>
        <authorList>
            <person name="Mick V.E."/>
            <person name="Itani O.A."/>
            <person name="Loftus R.W."/>
            <person name="Husted R.F."/>
            <person name="Schmidt T.J."/>
            <person name="Thomas C.P."/>
        </authorList>
    </citation>
    <scope>NUCLEOTIDE SEQUENCE [GENOMIC DNA] OF 1-50 (ISOFORMS 1 AND 2)</scope>
    <scope>INDUCTION</scope>
    <source>
        <tissue>Placenta</tissue>
    </source>
</reference>
<reference key="13">
    <citation type="journal article" date="1991" name="J. Clin. Endocrinol. Metab.">
        <title>Type I pseudohypoaldosteronism includes two clinically and genetically distinct entities with either renal or multiple target organ defects.</title>
        <authorList>
            <person name="Hanukoglu A."/>
        </authorList>
    </citation>
    <scope>DEFINITION OF DIFFERENT FORMS OF PSEUDOHYPOALDOSTERONISM TYPE 1</scope>
</reference>
<reference key="14">
    <citation type="journal article" date="1997" name="J. Biol. Chem.">
        <title>Identification of novel human WW domain-containing proteins by cloning of ligand targets.</title>
        <authorList>
            <person name="Pirozzi G."/>
            <person name="McConnell S.J."/>
            <person name="Uveges A.J."/>
            <person name="Carter J.M."/>
            <person name="Sparks A.B."/>
            <person name="Kay B.K."/>
            <person name="Fowlkes D.M."/>
        </authorList>
    </citation>
    <scope>INTERACTION WITH WWP1 AND WWP2</scope>
</reference>
<reference key="15">
    <citation type="journal article" date="1998" name="Am. J. Physiol.">
        <title>Cloning and functional studies of splice variants of the alpha-subunit of the amiloride-sensitive Na+ channel.</title>
        <authorList>
            <person name="Tucker J.K."/>
            <person name="Tamba K."/>
            <person name="Lee Y.-J."/>
            <person name="Shen L.-L."/>
            <person name="Warnock D.G."/>
            <person name="Oh Y."/>
        </authorList>
    </citation>
    <scope>ALTERNATIVE SPLICING (ISOFORMS 1; 3; 4 AND 5)</scope>
    <scope>FUNCTION (ISOFORM 4)</scope>
    <scope>TRANSPORTER ACTIVITY</scope>
    <scope>TISSUE SPECIFICITY (ISOFORM 4)</scope>
    <scope>MISCELLANEOUS (ISOFORMS 3 AND 5)</scope>
</reference>
<reference key="16">
    <citation type="journal article" date="1998" name="J. Biol. Chem.">
        <title>Inhibition of the epithelial Na+ channel by interaction of Nedd4 with a PY motif deleted in Liddle's syndrome.</title>
        <authorList>
            <person name="Goulet C.C."/>
            <person name="Volk K.A."/>
            <person name="Adams C.M."/>
            <person name="Prince L.S."/>
            <person name="Stokes J.B."/>
            <person name="Snyder P.M."/>
        </authorList>
    </citation>
    <scope>FUNCTION</scope>
    <scope>TRANSPORTER ACTIVITY</scope>
    <scope>ACTIVITY REGULATION</scope>
    <scope>UBIQUITINATION BY NEDD4</scope>
</reference>
<reference key="17">
    <citation type="journal article" date="2001" name="J. Biol. Chem.">
        <title>The Nedd4-like protein KIAA0439 is a potential regulator of the epithelial sodium channel.</title>
        <authorList>
            <person name="Harvey K.F."/>
            <person name="Dinudom A."/>
            <person name="Cook D.I."/>
            <person name="Kumar S."/>
        </authorList>
    </citation>
    <scope>UBIQUITINATION BY NEDD4 AND NEDD4L</scope>
</reference>
<reference key="18">
    <citation type="journal article" date="2002" name="Am. J. Physiol.">
        <title>Ubiquitin-protein ligase WWP2 binds to and downregulates the epithelial Na(+) channel.</title>
        <authorList>
            <person name="McDonald F.J."/>
            <person name="Western A.H."/>
            <person name="McNeil J.D."/>
            <person name="Thomas B.C."/>
            <person name="Olson D.R."/>
            <person name="Snyder P.M."/>
        </authorList>
    </citation>
    <scope>UBIQUITINATION BY NEDD4</scope>
    <scope>INTERACTION WITH WWP2</scope>
</reference>
<reference key="19">
    <citation type="journal article" date="2002" name="J. Biol. Chem.">
        <title>Serum and glucocorticoid-regulated kinase modulates Nedd4-2-mediated inhibition of the epithelial Na+ channel.</title>
        <authorList>
            <person name="Snyder P.M."/>
            <person name="Olson D.R."/>
            <person name="Thomas B.C."/>
        </authorList>
    </citation>
    <scope>UBIQUITINATION BY NEDD4 AND NEDD4L</scope>
</reference>
<reference key="20">
    <citation type="journal article" date="2007" name="J. Biol. Chem.">
        <title>Nedd4-2 catalyzes ubiquitination and degradation of cell surface ENaC.</title>
        <authorList>
            <person name="Zhou R."/>
            <person name="Patel S.V."/>
            <person name="Snyder P.M."/>
        </authorList>
    </citation>
    <scope>UBIQUITINATION BY NEDD4L</scope>
    <scope>MOTIF</scope>
    <scope>MUTAGENESIS OF TYR-644</scope>
</reference>
<reference key="21">
    <citation type="journal article" date="2008" name="J. Biol. Chem.">
        <title>Nedd4-2 induces endocytosis and degradation of proteolytically cleaved epithelial Na+ channels.</title>
        <authorList>
            <person name="Kabra R."/>
            <person name="Knight K.K."/>
            <person name="Zhou R."/>
            <person name="Snyder P.M."/>
        </authorList>
    </citation>
    <scope>SUBCELLULAR LOCATION</scope>
    <scope>UBIQUITINATION</scope>
</reference>
<reference key="22">
    <citation type="journal article" date="2008" name="J. Steroid Biochem. Mol. Biol.">
        <title>Renin-aldosterone response, urinary Na/K ratio and growth in pseudohypoaldosteronism patients with mutations in epithelial sodium channel (ENaC) subunit genes.</title>
        <authorList>
            <person name="Hanukoglu A."/>
            <person name="Edelheit O."/>
            <person name="Shriki Y."/>
            <person name="Gizewska M."/>
            <person name="Dascal N."/>
            <person name="Hanukoglu I."/>
        </authorList>
    </citation>
    <scope>GENOTYPE-PHENOTYPE RELATIONSHIPS IN PHA1B1</scope>
    <scope>LONG-TERM EFFECTS OF MUTATIONS ON PHA1B1</scope>
    <scope>VARIANT PHA1B1 CYS-327</scope>
    <scope>CHARACTERIZATION OF VARIANT PHA1B1 CYS-327</scope>
</reference>
<reference key="23">
    <citation type="journal article" date="2012" name="Histochem. Cell Biol.">
        <title>Epithelial sodium channels (ENaC) are uniformly distributed on motile cilia in the oviduct and the respiratory airways.</title>
        <authorList>
            <person name="Enuka Y."/>
            <person name="Hanukoglu I."/>
            <person name="Edelheit O."/>
            <person name="Vaknine H."/>
            <person name="Hanukoglu A."/>
        </authorList>
    </citation>
    <scope>SUBCELLULAR LOCATION</scope>
    <scope>TISSUE SPECIFICITY</scope>
</reference>
<reference key="24">
    <citation type="journal article" date="2012" name="J. Biol. Chem.">
        <title>Regulation of epithelial sodium channel trafficking by proprotein convertase subtilisin/kexin type 9 (PCSK9).</title>
        <authorList>
            <person name="Sharotri V."/>
            <person name="Collier D.M."/>
            <person name="Olson D.R."/>
            <person name="Zhou R."/>
            <person name="Snyder P.M."/>
        </authorList>
    </citation>
    <scope>INTERACTION WITH PCSK9</scope>
</reference>
<reference key="25">
    <citation type="journal article" date="2013" name="Am. J. Physiol.">
        <title>Identification of the SPLUNC1 ENaC-inhibitory domain yields novel strategies to treat sodium hyperabsorption in cystic fibrosis airway epithelial cultures.</title>
        <authorList>
            <person name="Hobbs C.A."/>
            <person name="Blanchard M.G."/>
            <person name="Alijevic O."/>
            <person name="Tan C.D."/>
            <person name="Kellenberger S."/>
            <person name="Bencharit S."/>
            <person name="Cao R."/>
            <person name="Kesimer M."/>
            <person name="Walton W.G."/>
            <person name="Henderson A.G."/>
            <person name="Redinbo M.R."/>
            <person name="Stutts M.J."/>
            <person name="Tarran R."/>
        </authorList>
    </citation>
    <scope>FUNCTION</scope>
    <scope>SUBCELLULAR LOCATION</scope>
    <scope>PROTEOLYTIC PROCESSING</scope>
    <scope>INTERACTION WITH BPIFA1</scope>
</reference>
<reference key="26">
    <citation type="journal article" date="2016" name="Gene">
        <title>Epithelial sodium channel (ENaC) family: Phylogeny, structure-function, tissue distribution, and associated inherited diseases.</title>
        <authorList>
            <person name="Hanukoglu I."/>
            <person name="Hanukoglu A."/>
        </authorList>
    </citation>
    <scope>NOMENCLATURE</scope>
</reference>
<reference key="27">
    <citation type="journal article" date="2017" name="Histochem. Cell Biol.">
        <title>Expression of epithelial sodium channel (ENaC) and CFTR in the human epidermis and epidermal appendages.</title>
        <authorList>
            <person name="Hanukoglu I."/>
            <person name="Boggula V.R."/>
            <person name="Vaknine H."/>
            <person name="Sharma S."/>
            <person name="Kleyman T."/>
            <person name="Hanukoglu A."/>
        </authorList>
    </citation>
    <scope>SUBCELLULAR LOCATION</scope>
    <scope>TISSUE SPECIFICITY</scope>
</reference>
<reference evidence="42" key="28">
    <citation type="journal article" date="2013" name="Biochim. Biophys. Acta">
        <title>Structure and dynamics of human Nedd4-1 WW3 in complex with the alphaENaC PY motif.</title>
        <authorList>
            <person name="Bobby R."/>
            <person name="Medini K."/>
            <person name="Neudecker P."/>
            <person name="Lee T.V."/>
            <person name="Brimble M.A."/>
            <person name="McDonald F.J."/>
            <person name="Lott J.S."/>
            <person name="Dingley A.J."/>
        </authorList>
    </citation>
    <scope>STRUCTURE BY NMR OF 638-648 IN COMPLEX WITH NEDD4</scope>
    <scope>UBIQUITINATION BY NEDD4</scope>
    <scope>MOTIF</scope>
</reference>
<reference evidence="43" key="29">
    <citation type="journal article" date="2018" name="Elife">
        <title>Structure of the human epithelial sodium channel by cryo-electron microscopy.</title>
        <authorList>
            <person name="Noreng S."/>
            <person name="Bharadwaj A."/>
            <person name="Posert R."/>
            <person name="Yoshioka C."/>
            <person name="Baconguis I."/>
        </authorList>
    </citation>
    <scope>STRUCTURE BY ELECTRON MICROSCOPY (3.90 ANGSTROMS) OF 111-543 IN COMPLEX WITH SCNN1B AND SCNN1G</scope>
    <scope>FUNCTION</scope>
    <scope>TRANSPORTER ACTIVITY</scope>
    <scope>SUBUNIT</scope>
    <scope>TOPOLOGY</scope>
    <scope>REGION</scope>
    <scope>DISULFIDE BOND</scope>
</reference>
<reference evidence="44" key="30">
    <citation type="journal article" date="2020" name="Elife">
        <title>Molecular principles of assembly, activation, and inhibition in epithelial sodium channel.</title>
        <authorList>
            <person name="Noreng S."/>
            <person name="Posert R."/>
            <person name="Bharadwaj A."/>
            <person name="Houser A."/>
            <person name="Baconguis I."/>
        </authorList>
    </citation>
    <scope>STRUCTURE BY ELECTRON MICROSCOPY (3.06 ANGSTROMS) IN COMPLEX WITH SCNN1B AND SCNN1G</scope>
    <scope>FUNCTION</scope>
    <scope>TRANSPORTER ACTIVITY</scope>
    <scope>TOPOLOGY</scope>
    <scope>REGION</scope>
    <scope>DISULFIDE BOND</scope>
</reference>
<reference key="31">
    <citation type="journal article" date="1999" name="Hypertension">
        <title>Genetic variants in the epithelial sodium channel in relation to aldosterone and potassium excretion and risk for hypertension.</title>
        <authorList>
            <person name="Ambrosius W.T."/>
            <person name="Bloem L.J."/>
            <person name="Zhou L."/>
            <person name="Rebhun J.F."/>
            <person name="Snyder P.M."/>
            <person name="Wagner M.A."/>
            <person name="Guo C."/>
            <person name="Pratt J.H."/>
        </authorList>
    </citation>
    <scope>VARIANTS THR-334; PHE-618 AND ALA-663</scope>
</reference>
<reference key="32">
    <citation type="journal article" date="2003" name="Hypertension">
        <authorList>
            <person name="Ambrosius W.T."/>
            <person name="Bloem L.J."/>
            <person name="Zhou L."/>
            <person name="Rebhun J.F."/>
            <person name="Snyder P.M."/>
            <person name="Wagner M.A."/>
            <person name="Guo C."/>
            <person name="Pratt J.H."/>
        </authorList>
    </citation>
    <scope>ERRATUM OF PUBMED:10523338</scope>
</reference>
<reference key="33">
    <citation type="journal article" date="2017" name="J. Am. Soc. Nephrol.">
        <title>A Missense Mutation in the Extracellular Domain of alphaENaC Causes Liddle Syndrome.</title>
        <authorList>
            <person name="Salih M."/>
            <person name="Gautschi I."/>
            <person name="van Bemmelen M.X."/>
            <person name="Di Benedetto M."/>
            <person name="Brooks A.S."/>
            <person name="Lugtenberg D."/>
            <person name="Schild L."/>
            <person name="Hoorn E.J."/>
        </authorList>
    </citation>
    <scope>INVOLVEMENT IN LIDLS3</scope>
    <scope>VARIANT LIDLS3 ARG-479</scope>
    <scope>FUNCTION</scope>
    <scope>CHARACTERIZATION OF VARIANT LIDLS3 ARG-479</scope>
    <scope>MUTAGENESIS OF CYS-394</scope>
</reference>
<reference key="34">
    <citation type="journal article" date="1999" name="J. Clin. Endocrinol. Metab.">
        <title>Polymorphisms of amiloride-sensitive sodium channel subunits in five sporadic cases of pseudohypoaldosteronism: do they have pathologic potential?</title>
        <authorList>
            <person name="Arai K."/>
            <person name="Zachman K."/>
            <person name="Shibasaki T."/>
            <person name="Chrousos G.P."/>
        </authorList>
    </citation>
    <scope>VARIANT ALA-663</scope>
</reference>
<reference key="35">
    <citation type="journal article" date="1999" name="J. Pediatr.">
        <title>Lung symptoms in pseudohypoaldosteronism type 1 are associated with deficiency of the alpha-subunit of the epithelial sodium channel.</title>
        <authorList>
            <person name="Schaedel C."/>
            <person name="Marthinsen L."/>
            <person name="Kristoffersson A.-C."/>
            <person name="Kornfalt R."/>
            <person name="Nilsson K.O."/>
            <person name="Orlenius B."/>
            <person name="Holmberg L."/>
        </authorList>
    </citation>
    <scope>VARIANT PHA1B1 LEU-562</scope>
    <scope>VARIANT ARG-493</scope>
</reference>
<reference key="36">
    <citation type="journal article" date="2002" name="J. Clin. Endocrinol. Metab.">
        <title>Novel mutations responsible for autosomal recessive multisystem pseudohypoaldosteronism and sequence variants in epithelial sodium channel alpha-, beta-, and gamma-subunit genes.</title>
        <authorList>
            <person name="Saxena A."/>
            <person name="Hanukoglu I."/>
            <person name="Saxena D."/>
            <person name="Thompson R.J."/>
            <person name="Gardiner R.M."/>
            <person name="Hanukoglu A."/>
        </authorList>
    </citation>
    <scope>VARIANT ALA-663</scope>
    <scope>FUNCTION</scope>
</reference>
<reference key="37">
    <citation type="journal article" date="2005" name="Clin. Chem.">
        <title>Impact of alphaENaC polymorphisms on the risk of ischemic cerebrovascular events: a multicenter case-control study.</title>
        <authorList>
            <person name="Hsieh K."/>
            <person name="Lalouschek W."/>
            <person name="Schillinger M."/>
            <person name="Endler G."/>
            <person name="Reisinger M."/>
            <person name="Janisiw M."/>
            <person name="Lang W."/>
            <person name="Cheng S."/>
            <person name="Wagner O."/>
            <person name="Mannhalter C."/>
        </authorList>
    </citation>
    <scope>VARIANT ALA-663</scope>
    <scope>ASSOCIATION OF VARIANT ARG-493 WITH RISK FOR ISCHEMIC CEREBROVASCULAR EVENTS</scope>
</reference>
<reference key="38">
    <citation type="journal article" date="2005" name="Clin. Endocrinol. (Oxf.)">
        <title>Novel mutations in epithelial sodium channel (ENaC) subunit genes and phenotypic expression of multisystem pseudohypoaldosteronism.</title>
        <authorList>
            <person name="Edelheit O."/>
            <person name="Hanukoglu I."/>
            <person name="Gizewska M."/>
            <person name="Kandemir N."/>
            <person name="Tenenbaum-Rakover Y."/>
            <person name="Yurdakoek M."/>
            <person name="Zajaczek S."/>
            <person name="Hanukoglu A."/>
        </authorList>
    </citation>
    <scope>VARIANT PHA1B1 CYS-327</scope>
</reference>
<reference key="39">
    <citation type="journal article" date="2005" name="Hum. Mol. Genet.">
        <title>Mutations in the beta-subunit of the epithelial Na+ channel in patients with a cystic fibrosis-like syndrome.</title>
        <authorList>
            <person name="Sheridan M.B."/>
            <person name="Fong P."/>
            <person name="Groman J.D."/>
            <person name="Conrad C."/>
            <person name="Flume P."/>
            <person name="Diaz R."/>
            <person name="Harris C."/>
            <person name="Knowles M."/>
            <person name="Cutting G.R."/>
        </authorList>
    </citation>
    <scope>VARIANT TRP-181</scope>
</reference>
<reference key="40">
    <citation type="journal article" date="2009" name="Hum. Mutat.">
        <title>Mutations in the amiloride-sensitive epithelial sodium channel in patients with cystic fibrosis-like disease.</title>
        <authorList>
            <person name="Azad A.K."/>
            <person name="Rauh R."/>
            <person name="Vermeulen F."/>
            <person name="Jaspers M."/>
            <person name="Korbmacher J."/>
            <person name="Boissier B."/>
            <person name="Bassinet L."/>
            <person name="Fichou Y."/>
            <person name="des Georges M."/>
            <person name="Stanke F."/>
            <person name="De Boeck K."/>
            <person name="Dupont L."/>
            <person name="Balascakova M."/>
            <person name="Hjelte L."/>
            <person name="Lebecque P."/>
            <person name="Radojkovic D."/>
            <person name="Castellani C."/>
            <person name="Schwartz M."/>
            <person name="Stuhrmann M."/>
            <person name="Schwarz M."/>
            <person name="Skalicka V."/>
            <person name="de Monestrol I."/>
            <person name="Girodon E."/>
            <person name="Ferec C."/>
            <person name="Claustres M."/>
            <person name="Tuemmler B."/>
            <person name="Cassiman J.-J."/>
            <person name="Korbmacher C."/>
            <person name="Cuppens H."/>
        </authorList>
    </citation>
    <scope>VARIANTS BESC2 LEU-61 AND ILE-114</scope>
    <scope>VARIANTS TRP-181; THR-334; ARG-493 AND ALA-663</scope>
    <scope>CHARACTERIZATION OF VARIANTS BESC2 LEU-61 AND ILE-114</scope>
    <scope>CHARACTERIZATION OF VARIANTS TRP-181; THR-334 AND ARG-493</scope>
</reference>
<feature type="chain" id="PRO_0000181261" description="Epithelial sodium channel subunit alpha">
    <location>
        <begin position="1"/>
        <end position="669"/>
    </location>
</feature>
<feature type="topological domain" description="Cytoplasmic" evidence="28 29 43 44">
    <location>
        <begin position="1"/>
        <end position="85"/>
    </location>
</feature>
<feature type="transmembrane region" description="Helical; Name=1" evidence="3">
    <location>
        <begin position="86"/>
        <end position="106"/>
    </location>
</feature>
<feature type="topological domain" description="Extracellular" evidence="28 29 43 44">
    <location>
        <begin position="107"/>
        <end position="562"/>
    </location>
</feature>
<feature type="transmembrane region" description="Helical; Name=2" evidence="3">
    <location>
        <begin position="563"/>
        <end position="583"/>
    </location>
</feature>
<feature type="topological domain" description="Cytoplasmic" evidence="28 29 43 44">
    <location>
        <begin position="584"/>
        <end position="669"/>
    </location>
</feature>
<feature type="region of interest" description="Disordered" evidence="4">
    <location>
        <begin position="1"/>
        <end position="43"/>
    </location>
</feature>
<feature type="region of interest" description="Gating release of inhibition by proteolysis (GRIP); protease-sensitive region that is responsible for the proteolytic activation of the channel" evidence="28 29">
    <location>
        <begin position="175"/>
        <end position="243"/>
    </location>
</feature>
<feature type="region of interest" description="Disordered" evidence="4">
    <location>
        <begin position="620"/>
        <end position="669"/>
    </location>
</feature>
<feature type="short sequence motif" description="PY motif; recruits WW domain-containing proteins and is thereby required for ubiquitination and inhibition of the channel by NEDD4 and NEDD4L" evidence="17 24">
    <location>
        <begin position="640"/>
        <end position="644"/>
    </location>
</feature>
<feature type="compositionally biased region" description="Low complexity" evidence="4">
    <location>
        <begin position="33"/>
        <end position="42"/>
    </location>
</feature>
<feature type="compositionally biased region" description="Pro residues" evidence="4">
    <location>
        <begin position="630"/>
        <end position="643"/>
    </location>
</feature>
<feature type="site" description="Cleavage by Furin" evidence="2">
    <location>
        <begin position="178"/>
        <end position="179"/>
    </location>
</feature>
<feature type="site" description="Cleavage by Furin" evidence="2">
    <location>
        <begin position="204"/>
        <end position="205"/>
    </location>
</feature>
<feature type="disulfide bond" evidence="28 29 43 44">
    <location>
        <begin position="133"/>
        <end position="305"/>
    </location>
</feature>
<feature type="disulfide bond" evidence="28 29 43 44">
    <location>
        <begin position="229"/>
        <end position="236"/>
    </location>
</feature>
<feature type="disulfide bond" evidence="28 29 43 44">
    <location>
        <begin position="282"/>
        <end position="289"/>
    </location>
</feature>
<feature type="disulfide bond" evidence="28 29 43 44">
    <location>
        <begin position="394"/>
        <end position="479"/>
    </location>
</feature>
<feature type="disulfide bond" evidence="28 29 43 44">
    <location>
        <begin position="416"/>
        <end position="475"/>
    </location>
</feature>
<feature type="disulfide bond" evidence="28 29 43 44">
    <location>
        <begin position="416"/>
        <end position="456"/>
    </location>
</feature>
<feature type="disulfide bond" evidence="28 29 43 44">
    <location>
        <begin position="420"/>
        <end position="471"/>
    </location>
</feature>
<feature type="disulfide bond" evidence="28 29 43 44">
    <location>
        <begin position="429"/>
        <end position="479"/>
    </location>
</feature>
<feature type="disulfide bond" evidence="28 29 43 44">
    <location>
        <begin position="429"/>
        <end position="456"/>
    </location>
</feature>
<feature type="disulfide bond" evidence="28 29 43 44">
    <location>
        <begin position="431"/>
        <end position="445"/>
    </location>
</feature>
<feature type="splice variant" id="VSP_007719" description="In isoform 2." evidence="39">
    <original>M</original>
    <variation>MGMARGSLTRVPGVMGEGTQGPELSLDPDPCSPQSTPGLMKGNKLEEQDPRPLQPIPGLM</variation>
    <location>
        <position position="1"/>
    </location>
</feature>
<feature type="splice variant" id="VSP_043667" description="In isoform 6." evidence="35">
    <original>M</original>
    <variation>MSSIKGNKLEEQDPRPLQPIPGLM</variation>
    <location>
        <position position="1"/>
    </location>
</feature>
<feature type="splice variant" id="VSP_007720" description="In isoform 3." evidence="39">
    <original>CNQNKSDCFYQTYSSGV</original>
    <variation>ELLSLPPPDVWKLLYFG</variation>
    <location>
        <begin position="229"/>
        <end position="245"/>
    </location>
</feature>
<feature type="splice variant" id="VSP_007721" description="In isoform 3." evidence="39">
    <location>
        <begin position="246"/>
        <end position="669"/>
    </location>
</feature>
<feature type="splice variant" id="VSP_007722" description="In isoform 4." evidence="39">
    <location>
        <begin position="327"/>
        <end position="345"/>
    </location>
</feature>
<feature type="splice variant" id="VSP_007723" description="In isoform 5." evidence="39">
    <original>G</original>
    <variation>GQVRSLTPVIPALWEAEAGGSRG</variation>
    <location>
        <position position="454"/>
    </location>
</feature>
<feature type="sequence variant" id="VAR_060793" description="In BESC2; hypoactive mutation resulting in reduction of protein expression and a significant decrease of amiloride-sensitive sodium currents; dbSNP:rs61758859." evidence="21">
    <original>F</original>
    <variation>L</variation>
    <location>
        <position position="61"/>
    </location>
</feature>
<feature type="sequence variant" id="VAR_060794" description="In BESC2; hyperactive mutation resulting in a significant increase of amiloride-sensitive sodium currents; dbSNP:rs61759861." evidence="21">
    <original>V</original>
    <variation>I</variation>
    <location>
        <position position="114"/>
    </location>
</feature>
<feature type="sequence variant" id="VAR_060795" description="Significant increase of amiloride-sensitive sodium currents; dbSNP:rs55797039." evidence="16 21">
    <original>R</original>
    <variation>W</variation>
    <location>
        <position position="181"/>
    </location>
</feature>
<feature type="sequence variant" id="VAR_026518" description="In PHA1B1; results in a significant reduction of channel function as compared to wild-type; significantly lowers both Li+ and Na+ ion currents; dbSNP:rs974854786." evidence="15 20">
    <original>G</original>
    <variation>C</variation>
    <location>
        <position position="327"/>
    </location>
</feature>
<feature type="sequence variant" id="VAR_060796" description="Significant decrease of amiloride-sensitive sodium currents; dbSNP:rs11542844." evidence="6 21">
    <original>A</original>
    <variation>T</variation>
    <location>
        <position position="334"/>
    </location>
</feature>
<feature type="sequence variant" id="VAR_052035" description="In dbSNP:rs13306616.">
    <original>P</original>
    <variation>H</variation>
    <location>
        <position position="402"/>
    </location>
</feature>
<feature type="sequence variant" id="VAR_081179" description="In LIDLS3; increased channel activity; dbSNP:rs201873521." evidence="27">
    <original>C</original>
    <variation>R</variation>
    <location>
        <position position="479"/>
    </location>
</feature>
<feature type="sequence variant" id="VAR_015833" description="Results in a 4-fold increase of amiloride-sensitive sodium currents; found in BESC2 patients at higher frequency than in controls; associated with an increased risk for ischemic cerebrovascular events; dbSNP:rs5742912." evidence="7 21">
    <original>W</original>
    <variation>R</variation>
    <location>
        <position position="493"/>
    </location>
</feature>
<feature type="sequence variant" id="VAR_015834" description="In PHA1B1; dbSNP:rs137852635." evidence="7">
    <original>S</original>
    <variation>L</variation>
    <location>
        <position position="562"/>
    </location>
</feature>
<feature type="sequence variant" id="VAR_060797" description="In dbSNP:rs59142484.">
    <original>V</original>
    <variation>I</variation>
    <location>
        <position position="573"/>
    </location>
</feature>
<feature type="sequence variant" id="VAR_022142" description="In dbSNP:rs3741913." evidence="6">
    <original>C</original>
    <variation>F</variation>
    <location>
        <position position="618"/>
    </location>
</feature>
<feature type="sequence variant" id="VAR_015835" description="In dbSNP:rs2228576." evidence="5 6 11 13 14 18 21">
    <original>T</original>
    <variation>A</variation>
    <location>
        <position position="663"/>
    </location>
</feature>
<feature type="mutagenesis site" description="Increased channel activity." evidence="27">
    <original>C</original>
    <variation>S</variation>
    <location>
        <position position="394"/>
    </location>
</feature>
<feature type="mutagenesis site" description="Prevents ubiquitination by NEDD4L." evidence="17">
    <original>Y</original>
    <variation>A</variation>
    <location>
        <position position="644"/>
    </location>
</feature>
<feature type="strand" evidence="46">
    <location>
        <begin position="115"/>
        <end position="121"/>
    </location>
</feature>
<feature type="strand" evidence="46">
    <location>
        <begin position="129"/>
        <end position="136"/>
    </location>
</feature>
<feature type="helix" evidence="46">
    <location>
        <begin position="144"/>
        <end position="161"/>
    </location>
</feature>
<feature type="strand" evidence="46">
    <location>
        <begin position="188"/>
        <end position="190"/>
    </location>
</feature>
<feature type="strand" evidence="46">
    <location>
        <begin position="224"/>
        <end position="228"/>
    </location>
</feature>
<feature type="strand" evidence="46">
    <location>
        <begin position="231"/>
        <end position="233"/>
    </location>
</feature>
<feature type="strand" evidence="46">
    <location>
        <begin position="237"/>
        <end position="243"/>
    </location>
</feature>
<feature type="helix" evidence="46">
    <location>
        <begin position="244"/>
        <end position="260"/>
    </location>
</feature>
<feature type="turn" evidence="46">
    <location>
        <begin position="274"/>
        <end position="278"/>
    </location>
</feature>
<feature type="strand" evidence="46">
    <location>
        <begin position="279"/>
        <end position="284"/>
    </location>
</feature>
<feature type="strand" evidence="46">
    <location>
        <begin position="294"/>
        <end position="298"/>
    </location>
</feature>
<feature type="strand" evidence="46">
    <location>
        <begin position="300"/>
        <end position="302"/>
    </location>
</feature>
<feature type="strand" evidence="46">
    <location>
        <begin position="304"/>
        <end position="309"/>
    </location>
</feature>
<feature type="strand" evidence="46">
    <location>
        <begin position="327"/>
        <end position="332"/>
    </location>
</feature>
<feature type="turn" evidence="46">
    <location>
        <begin position="341"/>
        <end position="343"/>
    </location>
</feature>
<feature type="strand" evidence="46">
    <location>
        <begin position="348"/>
        <end position="354"/>
    </location>
</feature>
<feature type="strand" evidence="46">
    <location>
        <begin position="356"/>
        <end position="358"/>
    </location>
</feature>
<feature type="helix" evidence="46">
    <location>
        <begin position="362"/>
        <end position="365"/>
    </location>
</feature>
<feature type="strand" evidence="46">
    <location>
        <begin position="367"/>
        <end position="369"/>
    </location>
</feature>
<feature type="strand" evidence="46">
    <location>
        <begin position="373"/>
        <end position="385"/>
    </location>
</feature>
<feature type="strand" evidence="46">
    <location>
        <begin position="389"/>
        <end position="391"/>
    </location>
</feature>
<feature type="strand" evidence="46">
    <location>
        <begin position="395"/>
        <end position="401"/>
    </location>
</feature>
<feature type="strand" evidence="46">
    <location>
        <begin position="407"/>
        <end position="409"/>
    </location>
</feature>
<feature type="helix" evidence="46">
    <location>
        <begin position="413"/>
        <end position="429"/>
    </location>
</feature>
<feature type="strand" evidence="46">
    <location>
        <begin position="430"/>
        <end position="432"/>
    </location>
</feature>
<feature type="turn" evidence="46">
    <location>
        <begin position="447"/>
        <end position="449"/>
    </location>
</feature>
<feature type="helix" evidence="46">
    <location>
        <begin position="454"/>
        <end position="465"/>
    </location>
</feature>
<feature type="helix" evidence="46">
    <location>
        <begin position="471"/>
        <end position="474"/>
    </location>
</feature>
<feature type="strand" evidence="46">
    <location>
        <begin position="478"/>
        <end position="494"/>
    </location>
</feature>
<feature type="turn" evidence="46">
    <location>
        <begin position="496"/>
        <end position="498"/>
    </location>
</feature>
<feature type="helix" evidence="46">
    <location>
        <begin position="499"/>
        <end position="509"/>
    </location>
</feature>
<feature type="strand" evidence="46">
    <location>
        <begin position="522"/>
        <end position="529"/>
    </location>
</feature>
<feature type="strand" evidence="46">
    <location>
        <begin position="531"/>
        <end position="539"/>
    </location>
</feature>
<feature type="helix" evidence="45">
    <location>
        <begin position="644"/>
        <end position="647"/>
    </location>
</feature>
<accession>P37088</accession>
<accession>A5X2U9</accession>
<accession>B4E2Q5</accession>
<accession>C5HTZ0</accession>
<accession>O43271</accession>
<accession>Q6GSQ6</accession>
<accession>Q9UM64</accession>